<name>PHS_PROM0</name>
<keyword id="KW-0456">Lyase</keyword>
<keyword id="KW-1185">Reference proteome</keyword>
<accession>A3PBL6</accession>
<proteinExistence type="inferred from homology"/>
<sequence length="96" mass="11254">MEPYILQDEELNELVVKIPGWEIKSKQIQREFNFANFIEAFAFMTKVALICEKYNHHPNWENVYAKVIIKLNTHDLGGITNLDQTLASEINKIFDQ</sequence>
<protein>
    <recommendedName>
        <fullName evidence="1">Putative pterin-4-alpha-carbinolamine dehydratase</fullName>
        <shortName evidence="1">PHS</shortName>
        <ecNumber evidence="1">4.2.1.96</ecNumber>
    </recommendedName>
    <alternativeName>
        <fullName evidence="1">4-alpha-hydroxy-tetrahydropterin dehydratase</fullName>
    </alternativeName>
    <alternativeName>
        <fullName evidence="1">Pterin carbinolamine dehydratase</fullName>
        <shortName evidence="1">PCD</shortName>
    </alternativeName>
</protein>
<gene>
    <name type="ordered locus">P9301_05181</name>
</gene>
<evidence type="ECO:0000255" key="1">
    <source>
        <dbReference type="HAMAP-Rule" id="MF_00434"/>
    </source>
</evidence>
<feature type="chain" id="PRO_1000050431" description="Putative pterin-4-alpha-carbinolamine dehydratase">
    <location>
        <begin position="1"/>
        <end position="96"/>
    </location>
</feature>
<reference key="1">
    <citation type="journal article" date="2007" name="PLoS Genet.">
        <title>Patterns and implications of gene gain and loss in the evolution of Prochlorococcus.</title>
        <authorList>
            <person name="Kettler G.C."/>
            <person name="Martiny A.C."/>
            <person name="Huang K."/>
            <person name="Zucker J."/>
            <person name="Coleman M.L."/>
            <person name="Rodrigue S."/>
            <person name="Chen F."/>
            <person name="Lapidus A."/>
            <person name="Ferriera S."/>
            <person name="Johnson J."/>
            <person name="Steglich C."/>
            <person name="Church G.M."/>
            <person name="Richardson P."/>
            <person name="Chisholm S.W."/>
        </authorList>
    </citation>
    <scope>NUCLEOTIDE SEQUENCE [LARGE SCALE GENOMIC DNA]</scope>
    <source>
        <strain>MIT 9301</strain>
    </source>
</reference>
<organism>
    <name type="scientific">Prochlorococcus marinus (strain MIT 9301)</name>
    <dbReference type="NCBI Taxonomy" id="167546"/>
    <lineage>
        <taxon>Bacteria</taxon>
        <taxon>Bacillati</taxon>
        <taxon>Cyanobacteriota</taxon>
        <taxon>Cyanophyceae</taxon>
        <taxon>Synechococcales</taxon>
        <taxon>Prochlorococcaceae</taxon>
        <taxon>Prochlorococcus</taxon>
    </lineage>
</organism>
<comment type="catalytic activity">
    <reaction evidence="1">
        <text>(4aS,6R)-4a-hydroxy-L-erythro-5,6,7,8-tetrahydrobiopterin = (6R)-L-erythro-6,7-dihydrobiopterin + H2O</text>
        <dbReference type="Rhea" id="RHEA:11920"/>
        <dbReference type="ChEBI" id="CHEBI:15377"/>
        <dbReference type="ChEBI" id="CHEBI:15642"/>
        <dbReference type="ChEBI" id="CHEBI:43120"/>
        <dbReference type="EC" id="4.2.1.96"/>
    </reaction>
</comment>
<comment type="similarity">
    <text evidence="1">Belongs to the pterin-4-alpha-carbinolamine dehydratase family.</text>
</comment>
<dbReference type="EC" id="4.2.1.96" evidence="1"/>
<dbReference type="EMBL" id="CP000576">
    <property type="protein sequence ID" value="ABO17141.1"/>
    <property type="molecule type" value="Genomic_DNA"/>
</dbReference>
<dbReference type="RefSeq" id="WP_011818001.1">
    <property type="nucleotide sequence ID" value="NC_009091.1"/>
</dbReference>
<dbReference type="SMR" id="A3PBL6"/>
<dbReference type="STRING" id="167546.P9301_05181"/>
<dbReference type="KEGG" id="pmg:P9301_05181"/>
<dbReference type="eggNOG" id="COG2154">
    <property type="taxonomic scope" value="Bacteria"/>
</dbReference>
<dbReference type="HOGENOM" id="CLU_081974_3_2_3"/>
<dbReference type="OrthoDB" id="9794987at2"/>
<dbReference type="Proteomes" id="UP000001430">
    <property type="component" value="Chromosome"/>
</dbReference>
<dbReference type="GO" id="GO:0008124">
    <property type="term" value="F:4-alpha-hydroxytetrahydrobiopterin dehydratase activity"/>
    <property type="evidence" value="ECO:0007669"/>
    <property type="project" value="UniProtKB-UniRule"/>
</dbReference>
<dbReference type="GO" id="GO:0006729">
    <property type="term" value="P:tetrahydrobiopterin biosynthetic process"/>
    <property type="evidence" value="ECO:0007669"/>
    <property type="project" value="InterPro"/>
</dbReference>
<dbReference type="CDD" id="cd00914">
    <property type="entry name" value="PCD_DCoH_subfamily_b"/>
    <property type="match status" value="1"/>
</dbReference>
<dbReference type="Gene3D" id="3.30.1360.20">
    <property type="entry name" value="Transcriptional coactivator/pterin dehydratase"/>
    <property type="match status" value="1"/>
</dbReference>
<dbReference type="HAMAP" id="MF_00434">
    <property type="entry name" value="Pterin_4_alpha"/>
    <property type="match status" value="1"/>
</dbReference>
<dbReference type="InterPro" id="IPR036428">
    <property type="entry name" value="PCD_sf"/>
</dbReference>
<dbReference type="InterPro" id="IPR001533">
    <property type="entry name" value="Pterin_deHydtase"/>
</dbReference>
<dbReference type="NCBIfam" id="NF002017">
    <property type="entry name" value="PRK00823.1-2"/>
    <property type="match status" value="1"/>
</dbReference>
<dbReference type="NCBIfam" id="NF002018">
    <property type="entry name" value="PRK00823.1-3"/>
    <property type="match status" value="1"/>
</dbReference>
<dbReference type="PANTHER" id="PTHR12599">
    <property type="entry name" value="PTERIN-4-ALPHA-CARBINOLAMINE DEHYDRATASE"/>
    <property type="match status" value="1"/>
</dbReference>
<dbReference type="PANTHER" id="PTHR12599:SF0">
    <property type="entry name" value="PTERIN-4-ALPHA-CARBINOLAMINE DEHYDRATASE"/>
    <property type="match status" value="1"/>
</dbReference>
<dbReference type="Pfam" id="PF01329">
    <property type="entry name" value="Pterin_4a"/>
    <property type="match status" value="1"/>
</dbReference>
<dbReference type="SUPFAM" id="SSF55248">
    <property type="entry name" value="PCD-like"/>
    <property type="match status" value="1"/>
</dbReference>